<comment type="similarity">
    <text evidence="1">Belongs to the UPF0412 family.</text>
</comment>
<organism>
    <name type="scientific">Salmonella agona (strain SL483)</name>
    <dbReference type="NCBI Taxonomy" id="454166"/>
    <lineage>
        <taxon>Bacteria</taxon>
        <taxon>Pseudomonadati</taxon>
        <taxon>Pseudomonadota</taxon>
        <taxon>Gammaproteobacteria</taxon>
        <taxon>Enterobacterales</taxon>
        <taxon>Enterobacteriaceae</taxon>
        <taxon>Salmonella</taxon>
    </lineage>
</organism>
<name>YAAI_SALA4</name>
<accession>B5F6Y6</accession>
<proteinExistence type="inferred from homology"/>
<gene>
    <name evidence="1" type="primary">yaaI</name>
    <name type="ordered locus">SeAg_B0011</name>
</gene>
<evidence type="ECO:0000255" key="1">
    <source>
        <dbReference type="HAMAP-Rule" id="MF_01372"/>
    </source>
</evidence>
<feature type="signal peptide" evidence="1">
    <location>
        <begin position="1"/>
        <end position="23"/>
    </location>
</feature>
<feature type="chain" id="PRO_1000144742" description="UPF0412 protein YaaI">
    <location>
        <begin position="24"/>
        <end position="134"/>
    </location>
</feature>
<reference key="1">
    <citation type="journal article" date="2011" name="J. Bacteriol.">
        <title>Comparative genomics of 28 Salmonella enterica isolates: evidence for CRISPR-mediated adaptive sublineage evolution.</title>
        <authorList>
            <person name="Fricke W.F."/>
            <person name="Mammel M.K."/>
            <person name="McDermott P.F."/>
            <person name="Tartera C."/>
            <person name="White D.G."/>
            <person name="Leclerc J.E."/>
            <person name="Ravel J."/>
            <person name="Cebula T.A."/>
        </authorList>
    </citation>
    <scope>NUCLEOTIDE SEQUENCE [LARGE SCALE GENOMIC DNA]</scope>
    <source>
        <strain>SL483</strain>
    </source>
</reference>
<dbReference type="EMBL" id="CP001138">
    <property type="protein sequence ID" value="ACH49792.1"/>
    <property type="molecule type" value="Genomic_DNA"/>
</dbReference>
<dbReference type="RefSeq" id="WP_001258084.1">
    <property type="nucleotide sequence ID" value="NC_011149.1"/>
</dbReference>
<dbReference type="KEGG" id="sea:SeAg_B0011"/>
<dbReference type="HOGENOM" id="CLU_158661_0_0_6"/>
<dbReference type="Proteomes" id="UP000008819">
    <property type="component" value="Chromosome"/>
</dbReference>
<dbReference type="HAMAP" id="MF_01372">
    <property type="entry name" value="UPF0412"/>
    <property type="match status" value="1"/>
</dbReference>
<dbReference type="InterPro" id="IPR020240">
    <property type="entry name" value="UPF0412_YaaI"/>
</dbReference>
<dbReference type="NCBIfam" id="NF007541">
    <property type="entry name" value="PRK10154.1"/>
    <property type="match status" value="1"/>
</dbReference>
<dbReference type="Pfam" id="PF10807">
    <property type="entry name" value="DUF2541"/>
    <property type="match status" value="1"/>
</dbReference>
<protein>
    <recommendedName>
        <fullName evidence="1">UPF0412 protein YaaI</fullName>
    </recommendedName>
</protein>
<keyword id="KW-0732">Signal</keyword>
<sequence length="134" mass="14406">MRSVLTISAGLLFGLALSSVAHANDHKILGVIAMPRNETNDLALKIPVCRIVKRIQLTADHGDIELSGASVYFKTARSASQSLNVPSSIKEGQTTGWININSDNDNKRCVSKITFSGHTVNSSDMARLKVIGDD</sequence>